<feature type="chain" id="PRO_0000134727" description="6,7-dimethyl-8-ribityllumazine synthase 2">
    <location>
        <begin position="1"/>
        <end position="158"/>
    </location>
</feature>
<feature type="active site" description="Proton donor" evidence="2">
    <location>
        <position position="86"/>
    </location>
</feature>
<feature type="binding site" evidence="1">
    <location>
        <position position="20"/>
    </location>
    <ligand>
        <name>5-amino-6-(D-ribitylamino)uracil</name>
        <dbReference type="ChEBI" id="CHEBI:15934"/>
    </ligand>
</feature>
<feature type="binding site" evidence="1">
    <location>
        <begin position="54"/>
        <end position="56"/>
    </location>
    <ligand>
        <name>5-amino-6-(D-ribitylamino)uracil</name>
        <dbReference type="ChEBI" id="CHEBI:15934"/>
    </ligand>
</feature>
<feature type="binding site" evidence="1">
    <location>
        <begin position="78"/>
        <end position="80"/>
    </location>
    <ligand>
        <name>5-amino-6-(D-ribitylamino)uracil</name>
        <dbReference type="ChEBI" id="CHEBI:15934"/>
    </ligand>
</feature>
<feature type="binding site" evidence="1">
    <location>
        <position position="111"/>
    </location>
    <ligand>
        <name>5-amino-6-(D-ribitylamino)uracil</name>
        <dbReference type="ChEBI" id="CHEBI:15934"/>
    </ligand>
</feature>
<feature type="binding site" evidence="1">
    <location>
        <position position="125"/>
    </location>
    <ligand>
        <name>(2S)-2-hydroxy-3-oxobutyl phosphate</name>
        <dbReference type="ChEBI" id="CHEBI:58830"/>
    </ligand>
</feature>
<reference key="1">
    <citation type="journal article" date="2002" name="Proc. Natl. Acad. Sci. U.S.A.">
        <title>The genome sequence of the facultative intracellular pathogen Brucella melitensis.</title>
        <authorList>
            <person name="DelVecchio V.G."/>
            <person name="Kapatral V."/>
            <person name="Redkar R.J."/>
            <person name="Patra G."/>
            <person name="Mujer C."/>
            <person name="Los T."/>
            <person name="Ivanova N."/>
            <person name="Anderson I."/>
            <person name="Bhattacharyya A."/>
            <person name="Lykidis A."/>
            <person name="Reznik G."/>
            <person name="Jablonski L."/>
            <person name="Larsen N."/>
            <person name="D'Souza M."/>
            <person name="Bernal A."/>
            <person name="Mazur M."/>
            <person name="Goltsman E."/>
            <person name="Selkov E."/>
            <person name="Elzer P.H."/>
            <person name="Hagius S."/>
            <person name="O'Callaghan D."/>
            <person name="Letesson J.-J."/>
            <person name="Haselkorn R."/>
            <person name="Kyrpides N.C."/>
            <person name="Overbeek R."/>
        </authorList>
    </citation>
    <scope>NUCLEOTIDE SEQUENCE [LARGE SCALE GENOMIC DNA]</scope>
    <source>
        <strain>ATCC 23456 / CCUG 17765 / NCTC 10094 / 16M</strain>
    </source>
</reference>
<reference key="2">
    <citation type="journal article" date="2006" name="J. Bacteriol.">
        <title>Evolution of vitamin B2 biosynthesis: 6,7-dimethyl-8-ribityllumazine synthases of Brucella.</title>
        <authorList>
            <person name="Zylberman V."/>
            <person name="Klinke S."/>
            <person name="Haase I."/>
            <person name="Bacher A."/>
            <person name="Fischer M."/>
            <person name="Goldbaum F.A."/>
        </authorList>
    </citation>
    <scope>GENE NAME</scope>
</reference>
<proteinExistence type="inferred from homology"/>
<evidence type="ECO:0000250" key="1"/>
<evidence type="ECO:0000255" key="2"/>
<evidence type="ECO:0000305" key="3"/>
<gene>
    <name type="primary">ribH2</name>
    <name type="ordered locus">BMEII0589</name>
</gene>
<name>RISB2_BRUME</name>
<sequence>MNQSCPNKTSFKIAFIQARWHADIVDEARKSFVAELAAKTGGSVEVEIFDVPGAYEIPLHAKTLARTGRYAAIVGAAFVIDGGIYRHDFVATAVINGMMQVQLETEVPVLSVVLTPHHFHESKEHHDFFHAHFKVKGVEAAHAALQIVSERSRIAALV</sequence>
<organism>
    <name type="scientific">Brucella melitensis biotype 1 (strain ATCC 23456 / CCUG 17765 / NCTC 10094 / 16M)</name>
    <dbReference type="NCBI Taxonomy" id="224914"/>
    <lineage>
        <taxon>Bacteria</taxon>
        <taxon>Pseudomonadati</taxon>
        <taxon>Pseudomonadota</taxon>
        <taxon>Alphaproteobacteria</taxon>
        <taxon>Hyphomicrobiales</taxon>
        <taxon>Brucellaceae</taxon>
        <taxon>Brucella/Ochrobactrum group</taxon>
        <taxon>Brucella</taxon>
    </lineage>
</organism>
<dbReference type="EC" id="2.5.1.78"/>
<dbReference type="EMBL" id="AE008918">
    <property type="protein sequence ID" value="AAL53831.1"/>
    <property type="molecule type" value="Genomic_DNA"/>
</dbReference>
<dbReference type="PIR" id="AD3583">
    <property type="entry name" value="AD3583"/>
</dbReference>
<dbReference type="RefSeq" id="WP_002965946.1">
    <property type="nucleotide sequence ID" value="NZ_GG703779.1"/>
</dbReference>
<dbReference type="SMR" id="P61712"/>
<dbReference type="KEGG" id="bme:BMEII0589"/>
<dbReference type="KEGG" id="bmel:DK63_2656"/>
<dbReference type="PATRIC" id="fig|224914.52.peg.2784"/>
<dbReference type="eggNOG" id="COG0054">
    <property type="taxonomic scope" value="Bacteria"/>
</dbReference>
<dbReference type="PhylomeDB" id="P61712"/>
<dbReference type="UniPathway" id="UPA00275">
    <property type="reaction ID" value="UER00404"/>
</dbReference>
<dbReference type="Proteomes" id="UP000000419">
    <property type="component" value="Chromosome II"/>
</dbReference>
<dbReference type="GO" id="GO:0005829">
    <property type="term" value="C:cytosol"/>
    <property type="evidence" value="ECO:0007669"/>
    <property type="project" value="TreeGrafter"/>
</dbReference>
<dbReference type="GO" id="GO:0009349">
    <property type="term" value="C:riboflavin synthase complex"/>
    <property type="evidence" value="ECO:0007669"/>
    <property type="project" value="InterPro"/>
</dbReference>
<dbReference type="GO" id="GO:0000906">
    <property type="term" value="F:6,7-dimethyl-8-ribityllumazine synthase activity"/>
    <property type="evidence" value="ECO:0007669"/>
    <property type="project" value="UniProtKB-UniRule"/>
</dbReference>
<dbReference type="GO" id="GO:0009231">
    <property type="term" value="P:riboflavin biosynthetic process"/>
    <property type="evidence" value="ECO:0007669"/>
    <property type="project" value="UniProtKB-UniRule"/>
</dbReference>
<dbReference type="CDD" id="cd09208">
    <property type="entry name" value="Lumazine_synthase-II"/>
    <property type="match status" value="1"/>
</dbReference>
<dbReference type="Gene3D" id="3.40.50.960">
    <property type="entry name" value="Lumazine/riboflavin synthase"/>
    <property type="match status" value="1"/>
</dbReference>
<dbReference type="HAMAP" id="MF_00178">
    <property type="entry name" value="Lumazine_synth"/>
    <property type="match status" value="1"/>
</dbReference>
<dbReference type="InterPro" id="IPR034964">
    <property type="entry name" value="LS"/>
</dbReference>
<dbReference type="InterPro" id="IPR002180">
    <property type="entry name" value="LS/RS"/>
</dbReference>
<dbReference type="InterPro" id="IPR036467">
    <property type="entry name" value="LS/RS_sf"/>
</dbReference>
<dbReference type="NCBIfam" id="NF009084">
    <property type="entry name" value="PRK12419.1"/>
    <property type="match status" value="1"/>
</dbReference>
<dbReference type="PANTHER" id="PTHR21058:SF0">
    <property type="entry name" value="6,7-DIMETHYL-8-RIBITYLLUMAZINE SYNTHASE"/>
    <property type="match status" value="1"/>
</dbReference>
<dbReference type="PANTHER" id="PTHR21058">
    <property type="entry name" value="6,7-DIMETHYL-8-RIBITYLLUMAZINE SYNTHASE DMRL SYNTHASE LUMAZINE SYNTHASE"/>
    <property type="match status" value="1"/>
</dbReference>
<dbReference type="Pfam" id="PF00885">
    <property type="entry name" value="DMRL_synthase"/>
    <property type="match status" value="1"/>
</dbReference>
<dbReference type="SUPFAM" id="SSF52121">
    <property type="entry name" value="Lumazine synthase"/>
    <property type="match status" value="1"/>
</dbReference>
<keyword id="KW-0686">Riboflavin biosynthesis</keyword>
<keyword id="KW-0808">Transferase</keyword>
<protein>
    <recommendedName>
        <fullName>6,7-dimethyl-8-ribityllumazine synthase 2</fullName>
        <shortName>DMRL synthase 2</shortName>
        <shortName>LS 2</shortName>
        <shortName>Lumazine synthase 2</shortName>
        <ecNumber>2.5.1.78</ecNumber>
    </recommendedName>
    <alternativeName>
        <fullName>Type II lumazine synthase</fullName>
    </alternativeName>
</protein>
<comment type="function">
    <text evidence="1">Catalyzes the formation of 6,7-dimethyl-8-ribityllumazine by condensation of 5-amino-6-(D-ribitylamino)uracil with 3,4-dihydroxy-2-butanone 4-phosphate. This is the penultimate step in the biosynthesis of riboflavin (By similarity).</text>
</comment>
<comment type="catalytic activity">
    <reaction>
        <text>(2S)-2-hydroxy-3-oxobutyl phosphate + 5-amino-6-(D-ribitylamino)uracil = 6,7-dimethyl-8-(1-D-ribityl)lumazine + phosphate + 2 H2O + H(+)</text>
        <dbReference type="Rhea" id="RHEA:26152"/>
        <dbReference type="ChEBI" id="CHEBI:15377"/>
        <dbReference type="ChEBI" id="CHEBI:15378"/>
        <dbReference type="ChEBI" id="CHEBI:15934"/>
        <dbReference type="ChEBI" id="CHEBI:43474"/>
        <dbReference type="ChEBI" id="CHEBI:58201"/>
        <dbReference type="ChEBI" id="CHEBI:58830"/>
        <dbReference type="EC" id="2.5.1.78"/>
    </reaction>
</comment>
<comment type="pathway">
    <text>Cofactor biosynthesis; riboflavin biosynthesis; riboflavin from 2-hydroxy-3-oxobutyl phosphate and 5-amino-6-(D-ribitylamino)uracil: step 1/2.</text>
</comment>
<comment type="subunit">
    <text evidence="1">Homodecamer, arranged as a dimer of pentamers.</text>
</comment>
<comment type="induction">
    <text evidence="1">The two ribH genes may be differentially expressed during the Brucella infection cycle. Brucella would use RibH1 for flavin biosynthesis during the extracellular phase and RibH2 during intracellular growth (By similarity).</text>
</comment>
<comment type="similarity">
    <text evidence="3">Belongs to the DMRL synthase family.</text>
</comment>
<accession>P61712</accession>
<accession>Q44668</accession>